<keyword id="KW-0963">Cytoplasm</keyword>
<keyword id="KW-0227">DNA damage</keyword>
<keyword id="KW-0234">DNA repair</keyword>
<keyword id="KW-0235">DNA replication</keyword>
<keyword id="KW-0238">DNA-binding</keyword>
<keyword id="KW-0239">DNA-directed DNA polymerase</keyword>
<keyword id="KW-0460">Magnesium</keyword>
<keyword id="KW-0479">Metal-binding</keyword>
<keyword id="KW-0515">Mutator protein</keyword>
<keyword id="KW-0548">Nucleotidyltransferase</keyword>
<keyword id="KW-0808">Transferase</keyword>
<sequence>MLIFPLINDTSRKIIHIDMDAFFAAVEERDNLALKGKPVVIGKDPRETGGRGVVSTCNYEARKYGIHSAMSSKEAYERCPKAIFISGNYEKYRTVGEQIRRIFKRYTDVVEPMSIDEAYLDVTNNKLGIKSAVKIAKLIQHDIWKEVGLTCSAGVSYNKFLAKLASDFEKPHGLTLVLKEDALCFLAKLPIEKFHGVGKKSVEKLHDMGIYTGQDLLAVPEMTLIDHFGRFGFDLYRKARGISNSPVKSDRIRKSIGSERTYAKLLYQETDIKAEISKNAKRVAALLQDHKKLGKTIVLKVRYADFTTLTKRVTLPELTRNAAQIEQVAGDIFDSLSENPAGIRLLGVTMTNLEDKVADISLDL</sequence>
<feature type="chain" id="PRO_1000084955" description="DNA polymerase IV">
    <location>
        <begin position="1"/>
        <end position="364"/>
    </location>
</feature>
<feature type="domain" description="UmuC" evidence="1">
    <location>
        <begin position="14"/>
        <end position="198"/>
    </location>
</feature>
<feature type="active site" evidence="1">
    <location>
        <position position="117"/>
    </location>
</feature>
<feature type="binding site" evidence="1">
    <location>
        <position position="18"/>
    </location>
    <ligand>
        <name>Mg(2+)</name>
        <dbReference type="ChEBI" id="CHEBI:18420"/>
    </ligand>
</feature>
<feature type="binding site" evidence="1">
    <location>
        <position position="116"/>
    </location>
    <ligand>
        <name>Mg(2+)</name>
        <dbReference type="ChEBI" id="CHEBI:18420"/>
    </ligand>
</feature>
<feature type="site" description="Substrate discrimination" evidence="1">
    <location>
        <position position="23"/>
    </location>
</feature>
<organism>
    <name type="scientific">Streptococcus pyogenes serotype M12 (strain MGAS9429)</name>
    <dbReference type="NCBI Taxonomy" id="370551"/>
    <lineage>
        <taxon>Bacteria</taxon>
        <taxon>Bacillati</taxon>
        <taxon>Bacillota</taxon>
        <taxon>Bacilli</taxon>
        <taxon>Lactobacillales</taxon>
        <taxon>Streptococcaceae</taxon>
        <taxon>Streptococcus</taxon>
    </lineage>
</organism>
<name>DPO4_STRPC</name>
<accession>Q1JK63</accession>
<reference key="1">
    <citation type="journal article" date="2006" name="Proc. Natl. Acad. Sci. U.S.A.">
        <title>Molecular genetic anatomy of inter- and intraserotype variation in the human bacterial pathogen group A Streptococcus.</title>
        <authorList>
            <person name="Beres S.B."/>
            <person name="Richter E.W."/>
            <person name="Nagiec M.J."/>
            <person name="Sumby P."/>
            <person name="Porcella S.F."/>
            <person name="DeLeo F.R."/>
            <person name="Musser J.M."/>
        </authorList>
    </citation>
    <scope>NUCLEOTIDE SEQUENCE [LARGE SCALE GENOMIC DNA]</scope>
    <source>
        <strain>MGAS9429</strain>
    </source>
</reference>
<dbReference type="EC" id="2.7.7.7" evidence="1"/>
<dbReference type="EMBL" id="CP000259">
    <property type="protein sequence ID" value="ABF32760.1"/>
    <property type="molecule type" value="Genomic_DNA"/>
</dbReference>
<dbReference type="RefSeq" id="WP_002988236.1">
    <property type="nucleotide sequence ID" value="NC_008021.1"/>
</dbReference>
<dbReference type="SMR" id="Q1JK63"/>
<dbReference type="KEGG" id="spk:MGAS9429_Spy1573"/>
<dbReference type="HOGENOM" id="CLU_012348_1_2_9"/>
<dbReference type="Proteomes" id="UP000002433">
    <property type="component" value="Chromosome"/>
</dbReference>
<dbReference type="GO" id="GO:0005829">
    <property type="term" value="C:cytosol"/>
    <property type="evidence" value="ECO:0007669"/>
    <property type="project" value="TreeGrafter"/>
</dbReference>
<dbReference type="GO" id="GO:0003684">
    <property type="term" value="F:damaged DNA binding"/>
    <property type="evidence" value="ECO:0007669"/>
    <property type="project" value="InterPro"/>
</dbReference>
<dbReference type="GO" id="GO:0003887">
    <property type="term" value="F:DNA-directed DNA polymerase activity"/>
    <property type="evidence" value="ECO:0007669"/>
    <property type="project" value="UniProtKB-UniRule"/>
</dbReference>
<dbReference type="GO" id="GO:0000287">
    <property type="term" value="F:magnesium ion binding"/>
    <property type="evidence" value="ECO:0007669"/>
    <property type="project" value="UniProtKB-UniRule"/>
</dbReference>
<dbReference type="GO" id="GO:0006261">
    <property type="term" value="P:DNA-templated DNA replication"/>
    <property type="evidence" value="ECO:0007669"/>
    <property type="project" value="UniProtKB-UniRule"/>
</dbReference>
<dbReference type="GO" id="GO:0042276">
    <property type="term" value="P:error-prone translesion synthesis"/>
    <property type="evidence" value="ECO:0007669"/>
    <property type="project" value="TreeGrafter"/>
</dbReference>
<dbReference type="GO" id="GO:0009432">
    <property type="term" value="P:SOS response"/>
    <property type="evidence" value="ECO:0007669"/>
    <property type="project" value="TreeGrafter"/>
</dbReference>
<dbReference type="CDD" id="cd03586">
    <property type="entry name" value="PolY_Pol_IV_kappa"/>
    <property type="match status" value="1"/>
</dbReference>
<dbReference type="FunFam" id="3.30.1490.100:FF:000004">
    <property type="entry name" value="DNA polymerase IV"/>
    <property type="match status" value="1"/>
</dbReference>
<dbReference type="FunFam" id="3.40.1170.60:FF:000001">
    <property type="entry name" value="DNA polymerase IV"/>
    <property type="match status" value="1"/>
</dbReference>
<dbReference type="Gene3D" id="3.30.70.270">
    <property type="match status" value="1"/>
</dbReference>
<dbReference type="Gene3D" id="3.40.1170.60">
    <property type="match status" value="1"/>
</dbReference>
<dbReference type="Gene3D" id="1.10.150.20">
    <property type="entry name" value="5' to 3' exonuclease, C-terminal subdomain"/>
    <property type="match status" value="1"/>
</dbReference>
<dbReference type="Gene3D" id="3.30.1490.100">
    <property type="entry name" value="DNA polymerase, Y-family, little finger domain"/>
    <property type="match status" value="1"/>
</dbReference>
<dbReference type="HAMAP" id="MF_01113">
    <property type="entry name" value="DNApol_IV"/>
    <property type="match status" value="1"/>
</dbReference>
<dbReference type="InterPro" id="IPR043502">
    <property type="entry name" value="DNA/RNA_pol_sf"/>
</dbReference>
<dbReference type="InterPro" id="IPR036775">
    <property type="entry name" value="DNA_pol_Y-fam_lit_finger_sf"/>
</dbReference>
<dbReference type="InterPro" id="IPR017961">
    <property type="entry name" value="DNA_pol_Y-fam_little_finger"/>
</dbReference>
<dbReference type="InterPro" id="IPR050116">
    <property type="entry name" value="DNA_polymerase-Y"/>
</dbReference>
<dbReference type="InterPro" id="IPR022880">
    <property type="entry name" value="DNApol_IV"/>
</dbReference>
<dbReference type="InterPro" id="IPR024728">
    <property type="entry name" value="PolY_HhH_motif"/>
</dbReference>
<dbReference type="InterPro" id="IPR043128">
    <property type="entry name" value="Rev_trsase/Diguanyl_cyclase"/>
</dbReference>
<dbReference type="InterPro" id="IPR001126">
    <property type="entry name" value="UmuC"/>
</dbReference>
<dbReference type="NCBIfam" id="NF002677">
    <property type="entry name" value="PRK02406.1"/>
    <property type="match status" value="1"/>
</dbReference>
<dbReference type="PANTHER" id="PTHR11076:SF33">
    <property type="entry name" value="DNA POLYMERASE KAPPA"/>
    <property type="match status" value="1"/>
</dbReference>
<dbReference type="PANTHER" id="PTHR11076">
    <property type="entry name" value="DNA REPAIR POLYMERASE UMUC / TRANSFERASE FAMILY MEMBER"/>
    <property type="match status" value="1"/>
</dbReference>
<dbReference type="Pfam" id="PF00817">
    <property type="entry name" value="IMS"/>
    <property type="match status" value="1"/>
</dbReference>
<dbReference type="Pfam" id="PF11799">
    <property type="entry name" value="IMS_C"/>
    <property type="match status" value="1"/>
</dbReference>
<dbReference type="Pfam" id="PF11798">
    <property type="entry name" value="IMS_HHH"/>
    <property type="match status" value="1"/>
</dbReference>
<dbReference type="SUPFAM" id="SSF56672">
    <property type="entry name" value="DNA/RNA polymerases"/>
    <property type="match status" value="1"/>
</dbReference>
<dbReference type="SUPFAM" id="SSF100879">
    <property type="entry name" value="Lesion bypass DNA polymerase (Y-family), little finger domain"/>
    <property type="match status" value="1"/>
</dbReference>
<dbReference type="PROSITE" id="PS50173">
    <property type="entry name" value="UMUC"/>
    <property type="match status" value="1"/>
</dbReference>
<protein>
    <recommendedName>
        <fullName evidence="1">DNA polymerase IV</fullName>
        <shortName evidence="1">Pol IV</shortName>
        <ecNumber evidence="1">2.7.7.7</ecNumber>
    </recommendedName>
</protein>
<proteinExistence type="inferred from homology"/>
<gene>
    <name evidence="1" type="primary">dinB</name>
    <name type="ordered locus">MGAS9429_Spy1573</name>
</gene>
<evidence type="ECO:0000255" key="1">
    <source>
        <dbReference type="HAMAP-Rule" id="MF_01113"/>
    </source>
</evidence>
<comment type="function">
    <text evidence="1">Poorly processive, error-prone DNA polymerase involved in untargeted mutagenesis. Copies undamaged DNA at stalled replication forks, which arise in vivo from mismatched or misaligned primer ends. These misaligned primers can be extended by PolIV. Exhibits no 3'-5' exonuclease (proofreading) activity. May be involved in translesional synthesis, in conjunction with the beta clamp from PolIII.</text>
</comment>
<comment type="catalytic activity">
    <reaction evidence="1">
        <text>DNA(n) + a 2'-deoxyribonucleoside 5'-triphosphate = DNA(n+1) + diphosphate</text>
        <dbReference type="Rhea" id="RHEA:22508"/>
        <dbReference type="Rhea" id="RHEA-COMP:17339"/>
        <dbReference type="Rhea" id="RHEA-COMP:17340"/>
        <dbReference type="ChEBI" id="CHEBI:33019"/>
        <dbReference type="ChEBI" id="CHEBI:61560"/>
        <dbReference type="ChEBI" id="CHEBI:173112"/>
        <dbReference type="EC" id="2.7.7.7"/>
    </reaction>
</comment>
<comment type="cofactor">
    <cofactor evidence="1">
        <name>Mg(2+)</name>
        <dbReference type="ChEBI" id="CHEBI:18420"/>
    </cofactor>
    <text evidence="1">Binds 2 magnesium ions per subunit.</text>
</comment>
<comment type="subunit">
    <text evidence="1">Monomer.</text>
</comment>
<comment type="subcellular location">
    <subcellularLocation>
        <location evidence="1">Cytoplasm</location>
    </subcellularLocation>
</comment>
<comment type="similarity">
    <text evidence="1">Belongs to the DNA polymerase type-Y family.</text>
</comment>